<name>POLG_YEFVN</name>
<accession>Q1X881</accession>
<reference key="1">
    <citation type="journal article" date="2006" name="J. Gen. Virol.">
        <title>Genome analysis and phylogenetic relationships between east, central and west African isolates of Yellow fever virus.</title>
        <authorList>
            <person name="von Lindern J.J."/>
            <person name="Aroner S."/>
            <person name="Barrett N.D."/>
            <person name="Wicker J.A."/>
            <person name="Davis C.T."/>
            <person name="Barrett A.D."/>
        </authorList>
    </citation>
    <scope>NUCLEOTIDE SEQUENCE [GENOMIC RNA]</scope>
</reference>
<evidence type="ECO:0000250" key="1"/>
<evidence type="ECO:0000250" key="2">
    <source>
        <dbReference type="UniProtKB" id="P03314"/>
    </source>
</evidence>
<evidence type="ECO:0000250" key="3">
    <source>
        <dbReference type="UniProtKB" id="P14335"/>
    </source>
</evidence>
<evidence type="ECO:0000250" key="4">
    <source>
        <dbReference type="UniProtKB" id="P14336"/>
    </source>
</evidence>
<evidence type="ECO:0000250" key="5">
    <source>
        <dbReference type="UniProtKB" id="P14340"/>
    </source>
</evidence>
<evidence type="ECO:0000250" key="6">
    <source>
        <dbReference type="UniProtKB" id="P17763"/>
    </source>
</evidence>
<evidence type="ECO:0000250" key="7">
    <source>
        <dbReference type="UniProtKB" id="P29990"/>
    </source>
</evidence>
<evidence type="ECO:0000250" key="8">
    <source>
        <dbReference type="UniProtKB" id="Q32ZE1"/>
    </source>
</evidence>
<evidence type="ECO:0000250" key="9">
    <source>
        <dbReference type="UniProtKB" id="Q6YMS4"/>
    </source>
</evidence>
<evidence type="ECO:0000250" key="10">
    <source>
        <dbReference type="UniProtKB" id="Q9Q6P4"/>
    </source>
</evidence>
<evidence type="ECO:0000255" key="11"/>
<evidence type="ECO:0000255" key="12">
    <source>
        <dbReference type="PROSITE-ProRule" id="PRU00539"/>
    </source>
</evidence>
<evidence type="ECO:0000255" key="13">
    <source>
        <dbReference type="PROSITE-ProRule" id="PRU00541"/>
    </source>
</evidence>
<evidence type="ECO:0000255" key="14">
    <source>
        <dbReference type="PROSITE-ProRule" id="PRU00542"/>
    </source>
</evidence>
<evidence type="ECO:0000255" key="15">
    <source>
        <dbReference type="PROSITE-ProRule" id="PRU00859"/>
    </source>
</evidence>
<evidence type="ECO:0000255" key="16">
    <source>
        <dbReference type="PROSITE-ProRule" id="PRU00860"/>
    </source>
</evidence>
<evidence type="ECO:0000255" key="17">
    <source>
        <dbReference type="PROSITE-ProRule" id="PRU00924"/>
    </source>
</evidence>
<evidence type="ECO:0000256" key="18">
    <source>
        <dbReference type="SAM" id="MobiDB-lite"/>
    </source>
</evidence>
<evidence type="ECO:0000305" key="19"/>
<evidence type="ECO:0007829" key="20">
    <source>
        <dbReference type="PDB" id="5YXA"/>
    </source>
</evidence>
<evidence type="ECO:0007829" key="21">
    <source>
        <dbReference type="PDB" id="8GPT"/>
    </source>
</evidence>
<keyword id="KW-0002">3D-structure</keyword>
<keyword id="KW-0007">Acetylation</keyword>
<keyword id="KW-1072">Activation of host autophagy by virus</keyword>
<keyword id="KW-0067">ATP-binding</keyword>
<keyword id="KW-0167">Capsid protein</keyword>
<keyword id="KW-1165">Clathrin-mediated endocytosis of virus by host</keyword>
<keyword id="KW-0165">Cleavage on pair of basic residues</keyword>
<keyword id="KW-1015">Disulfide bond</keyword>
<keyword id="KW-1170">Fusion of virus membrane with host endosomal membrane</keyword>
<keyword id="KW-1168">Fusion of virus membrane with host membrane</keyword>
<keyword id="KW-0325">Glycoprotein</keyword>
<keyword id="KW-0342">GTP-binding</keyword>
<keyword id="KW-0347">Helicase</keyword>
<keyword id="KW-1035">Host cytoplasm</keyword>
<keyword id="KW-1038">Host endoplasmic reticulum</keyword>
<keyword id="KW-1043">Host membrane</keyword>
<keyword id="KW-1048">Host nucleus</keyword>
<keyword id="KW-0945">Host-virus interaction</keyword>
<keyword id="KW-0378">Hydrolase</keyword>
<keyword id="KW-1090">Inhibition of host innate immune response by virus</keyword>
<keyword id="KW-1114">Inhibition of host interferon signaling pathway by virus</keyword>
<keyword id="KW-1106">Inhibition of host STAT2 by virus</keyword>
<keyword id="KW-0922">Interferon antiviral system evasion</keyword>
<keyword id="KW-0472">Membrane</keyword>
<keyword id="KW-0479">Metal-binding</keyword>
<keyword id="KW-0489">Methyltransferase</keyword>
<keyword id="KW-0506">mRNA capping</keyword>
<keyword id="KW-0507">mRNA processing</keyword>
<keyword id="KW-0511">Multifunctional enzyme</keyword>
<keyword id="KW-0547">Nucleotide-binding</keyword>
<keyword id="KW-0548">Nucleotidyltransferase</keyword>
<keyword id="KW-0597">Phosphoprotein</keyword>
<keyword id="KW-0645">Protease</keyword>
<keyword id="KW-0694">RNA-binding</keyword>
<keyword id="KW-0696">RNA-directed RNA polymerase</keyword>
<keyword id="KW-0949">S-adenosyl-L-methionine</keyword>
<keyword id="KW-0964">Secreted</keyword>
<keyword id="KW-0720">Serine protease</keyword>
<keyword id="KW-0941">Suppressor of RNA silencing</keyword>
<keyword id="KW-0804">Transcription</keyword>
<keyword id="KW-0805">Transcription regulation</keyword>
<keyword id="KW-0808">Transferase</keyword>
<keyword id="KW-0812">Transmembrane</keyword>
<keyword id="KW-1133">Transmembrane helix</keyword>
<keyword id="KW-0832">Ubl conjugation</keyword>
<keyword id="KW-1161">Viral attachment to host cell</keyword>
<keyword id="KW-0261">Viral envelope protein</keyword>
<keyword id="KW-0899">Viral immunoevasion</keyword>
<keyword id="KW-1162">Viral penetration into host cytoplasm</keyword>
<keyword id="KW-0693">Viral RNA replication</keyword>
<keyword id="KW-0946">Virion</keyword>
<keyword id="KW-1164">Virus endocytosis by host</keyword>
<keyword id="KW-1160">Virus entry into host cell</keyword>
<keyword id="KW-0862">Zinc</keyword>
<proteinExistence type="evidence at protein level"/>
<feature type="chain" id="PRO_0000405161" description="Genome polyprotein">
    <location>
        <begin position="1"/>
        <end position="3412"/>
    </location>
</feature>
<feature type="chain" id="PRO_0000261545" description="Capsid protein C" evidence="2">
    <location>
        <begin position="1"/>
        <end position="101"/>
    </location>
</feature>
<feature type="propeptide" id="PRO_0000261546" description="ER anchor for the capsid protein C, removed in mature form by serine protease NS3" evidence="2">
    <location>
        <begin position="102"/>
        <end position="121"/>
    </location>
</feature>
<feature type="chain" id="PRO_0000261547" description="Protein prM" evidence="7">
    <location>
        <begin position="122"/>
        <end position="285"/>
    </location>
</feature>
<feature type="chain" id="PRO_0000261548" description="Peptide pr" evidence="7">
    <location>
        <begin position="122"/>
        <end position="210"/>
    </location>
</feature>
<feature type="chain" id="PRO_0000261549" description="Small envelope protein M" evidence="7">
    <location>
        <begin position="211"/>
        <end position="285"/>
    </location>
</feature>
<feature type="chain" id="PRO_0000261550" description="Envelope protein E" evidence="7">
    <location>
        <begin position="286"/>
        <end position="778"/>
    </location>
</feature>
<feature type="chain" id="PRO_0000261551" description="Non-structural protein 1" evidence="2">
    <location>
        <begin position="779"/>
        <end position="1130"/>
    </location>
</feature>
<feature type="chain" id="PRO_0000261552" description="Non-structural protein 2A" evidence="7">
    <location>
        <begin position="1131"/>
        <end position="1354"/>
    </location>
</feature>
<feature type="chain" id="PRO_0000261553" description="Non-structural protein 2A-alpha" evidence="7">
    <location>
        <begin position="1131"/>
        <end position="1320"/>
    </location>
</feature>
<feature type="chain" id="PRO_0000261554" description="Serine protease subunit NS2B" evidence="2">
    <location>
        <begin position="1355"/>
        <end position="1484"/>
    </location>
</feature>
<feature type="chain" id="PRO_0000261555" description="Serine protease NS3" evidence="2">
    <location>
        <begin position="1485"/>
        <end position="2107"/>
    </location>
</feature>
<feature type="chain" id="PRO_0000261556" description="Non-structural protein 4A" evidence="2">
    <location>
        <begin position="2108"/>
        <end position="2233"/>
    </location>
</feature>
<feature type="peptide" id="PRO_0000261557" description="Peptide 2k" evidence="2">
    <location>
        <begin position="2234"/>
        <end position="2256"/>
    </location>
</feature>
<feature type="chain" id="PRO_0000261558" description="Non-structural protein 4B" evidence="2">
    <location>
        <begin position="2257"/>
        <end position="2507"/>
    </location>
</feature>
<feature type="chain" id="PRO_0000261559" description="RNA-directed RNA polymerase NS5" evidence="2">
    <location>
        <begin position="2508"/>
        <end position="3412"/>
    </location>
</feature>
<feature type="topological domain" description="Cytoplasmic" evidence="11">
    <location>
        <begin position="1"/>
        <end position="104"/>
    </location>
</feature>
<feature type="transmembrane region" description="Helical" evidence="11">
    <location>
        <begin position="105"/>
        <end position="125"/>
    </location>
</feature>
<feature type="topological domain" description="Extracellular" evidence="11">
    <location>
        <begin position="126"/>
        <end position="244"/>
    </location>
</feature>
<feature type="transmembrane region" description="Helical" evidence="11">
    <location>
        <begin position="245"/>
        <end position="265"/>
    </location>
</feature>
<feature type="topological domain" description="Cytoplasmic" evidence="11">
    <location>
        <begin position="266"/>
        <end position="270"/>
    </location>
</feature>
<feature type="transmembrane region" description="Helical" evidence="11">
    <location>
        <begin position="271"/>
        <end position="285"/>
    </location>
</feature>
<feature type="topological domain" description="Extracellular" evidence="11">
    <location>
        <begin position="286"/>
        <end position="730"/>
    </location>
</feature>
<feature type="transmembrane region" description="Helical" evidence="11">
    <location>
        <begin position="731"/>
        <end position="751"/>
    </location>
</feature>
<feature type="topological domain" description="Extracellular" evidence="11">
    <location>
        <begin position="752"/>
        <end position="757"/>
    </location>
</feature>
<feature type="transmembrane region" description="Helical" evidence="11">
    <location>
        <begin position="758"/>
        <end position="778"/>
    </location>
</feature>
<feature type="topological domain" description="Extracellular" evidence="2">
    <location>
        <begin position="779"/>
        <end position="1132"/>
    </location>
</feature>
<feature type="transmembrane region" description="Helical" evidence="2">
    <location>
        <begin position="1133"/>
        <end position="1153"/>
    </location>
</feature>
<feature type="topological domain" description="Cytoplasmic" evidence="2">
    <location>
        <begin position="1154"/>
        <end position="1201"/>
    </location>
</feature>
<feature type="transmembrane region" description="Helical" evidence="2">
    <location>
        <begin position="1202"/>
        <end position="1222"/>
    </location>
</feature>
<feature type="topological domain" description="Lumenal" evidence="2">
    <location>
        <begin position="1223"/>
        <end position="1287"/>
    </location>
</feature>
<feature type="transmembrane region" description="Helical" evidence="2">
    <location>
        <begin position="1288"/>
        <end position="1308"/>
    </location>
</feature>
<feature type="topological domain" description="Cytoplasmic" evidence="2">
    <location>
        <begin position="1309"/>
        <end position="1355"/>
    </location>
</feature>
<feature type="transmembrane region" description="Helical" evidence="2">
    <location>
        <begin position="1356"/>
        <end position="1376"/>
    </location>
</feature>
<feature type="topological domain" description="Lumenal" evidence="2">
    <location>
        <begin position="1377"/>
        <end position="1378"/>
    </location>
</feature>
<feature type="transmembrane region" description="Helical" evidence="11">
    <location>
        <begin position="1379"/>
        <end position="1399"/>
    </location>
</feature>
<feature type="topological domain" description="Cytoplasmic" evidence="11">
    <location>
        <begin position="1400"/>
        <end position="1456"/>
    </location>
</feature>
<feature type="intramembrane region" description="Helical" evidence="11">
    <location>
        <begin position="1457"/>
        <end position="1477"/>
    </location>
</feature>
<feature type="topological domain" description="Cytoplasmic" evidence="11">
    <location>
        <begin position="1478"/>
        <end position="2157"/>
    </location>
</feature>
<feature type="transmembrane region" description="Helical" evidence="11">
    <location>
        <begin position="2158"/>
        <end position="2178"/>
    </location>
</feature>
<feature type="topological domain" description="Lumenal" evidence="11">
    <location>
        <begin position="2179"/>
        <end position="2186"/>
    </location>
</feature>
<feature type="intramembrane region" description="Helical" evidence="11">
    <location>
        <begin position="2187"/>
        <end position="2207"/>
    </location>
</feature>
<feature type="topological domain" description="Lumenal" evidence="11">
    <location>
        <begin position="2208"/>
        <end position="2209"/>
    </location>
</feature>
<feature type="transmembrane region" description="Helical" evidence="11">
    <location>
        <begin position="2210"/>
        <end position="2230"/>
    </location>
</feature>
<feature type="topological domain" description="Cytoplasmic" evidence="11">
    <location>
        <begin position="2231"/>
        <end position="2241"/>
    </location>
</feature>
<feature type="transmembrane region" description="Helical; Note=Signal for NS4B" evidence="11">
    <location>
        <begin position="2242"/>
        <end position="2262"/>
    </location>
</feature>
<feature type="topological domain" description="Lumenal" evidence="11">
    <location>
        <begin position="2263"/>
        <end position="2293"/>
    </location>
</feature>
<feature type="intramembrane region" description="Helical" evidence="11">
    <location>
        <begin position="2294"/>
        <end position="2314"/>
    </location>
</feature>
<feature type="topological domain" description="Lumenal" evidence="11">
    <location>
        <begin position="2315"/>
        <end position="2360"/>
    </location>
</feature>
<feature type="transmembrane region" description="Helical" evidence="11">
    <location>
        <begin position="2361"/>
        <end position="2380"/>
    </location>
</feature>
<feature type="topological domain" description="Cytoplasmic" evidence="11">
    <location>
        <begin position="2381"/>
        <end position="2421"/>
    </location>
</feature>
<feature type="transmembrane region" description="Helical" evidence="11">
    <location>
        <begin position="2422"/>
        <end position="2442"/>
    </location>
</feature>
<feature type="topological domain" description="Lumenal" evidence="11">
    <location>
        <begin position="2443"/>
        <end position="2445"/>
    </location>
</feature>
<feature type="transmembrane region" description="Helical" evidence="11">
    <location>
        <begin position="2446"/>
        <end position="2466"/>
    </location>
</feature>
<feature type="topological domain" description="Cytoplasmic" evidence="11">
    <location>
        <begin position="2467"/>
        <end position="3411"/>
    </location>
</feature>
<feature type="domain" description="Peptidase S7" evidence="16">
    <location>
        <begin position="1485"/>
        <end position="1665"/>
    </location>
</feature>
<feature type="domain" description="Helicase ATP-binding" evidence="13">
    <location>
        <begin position="1669"/>
        <end position="1825"/>
    </location>
</feature>
<feature type="domain" description="Helicase C-terminal" evidence="14">
    <location>
        <begin position="1836"/>
        <end position="1997"/>
    </location>
</feature>
<feature type="domain" description="mRNA cap 0-1 NS5-type MT" evidence="17">
    <location>
        <begin position="2508"/>
        <end position="2772"/>
    </location>
</feature>
<feature type="domain" description="RdRp catalytic" evidence="12">
    <location>
        <begin position="3036"/>
        <end position="3188"/>
    </location>
</feature>
<feature type="region of interest" description="Hydrophobic; homodimerization of capsid protein C" evidence="7">
    <location>
        <begin position="38"/>
        <end position="72"/>
    </location>
</feature>
<feature type="region of interest" description="Fusion peptide" evidence="4">
    <location>
        <begin position="383"/>
        <end position="396"/>
    </location>
</feature>
<feature type="region of interest" description="Interacts with and activates NS3 protease" evidence="15">
    <location>
        <begin position="1407"/>
        <end position="1446"/>
    </location>
</feature>
<feature type="region of interest" description="Important for RNA-binding" evidence="5">
    <location>
        <begin position="1673"/>
        <end position="1676"/>
    </location>
</feature>
<feature type="region of interest" description="Disordered" evidence="18">
    <location>
        <begin position="1942"/>
        <end position="1963"/>
    </location>
</feature>
<feature type="short sequence motif" description="DEAH box" evidence="13">
    <location>
        <begin position="1773"/>
        <end position="1776"/>
    </location>
</feature>
<feature type="short sequence motif" description="Nuclear localization signal" evidence="1">
    <location>
        <begin position="2879"/>
        <end position="2912"/>
    </location>
</feature>
<feature type="active site" description="Charge relay system; for serine protease NS3 activity" evidence="16">
    <location>
        <position position="1537"/>
    </location>
</feature>
<feature type="active site" description="Charge relay system; for serine protease NS3 activity" evidence="16">
    <location>
        <position position="1561"/>
    </location>
</feature>
<feature type="active site" description="Charge relay system; for serine protease NS3 activity" evidence="16">
    <location>
        <position position="1622"/>
    </location>
</feature>
<feature type="active site" description="For 2'-O-MTase activity" evidence="9">
    <location>
        <position position="2568"/>
    </location>
</feature>
<feature type="active site" description="For 2'-O-MTase activity" evidence="9">
    <location>
        <position position="2653"/>
    </location>
</feature>
<feature type="active site" description="For 2'-O-MTase activity" evidence="9">
    <location>
        <position position="2689"/>
    </location>
</feature>
<feature type="active site" description="For 2'-O-MTase activity" evidence="9">
    <location>
        <position position="2725"/>
    </location>
</feature>
<feature type="binding site" evidence="13">
    <location>
        <begin position="1682"/>
        <end position="1689"/>
    </location>
    <ligand>
        <name>ATP</name>
        <dbReference type="ChEBI" id="CHEBI:30616"/>
    </ligand>
</feature>
<feature type="binding site" evidence="17">
    <location>
        <position position="2563"/>
    </location>
    <ligand>
        <name>S-adenosyl-L-methionine</name>
        <dbReference type="ChEBI" id="CHEBI:59789"/>
    </ligand>
</feature>
<feature type="binding site" evidence="17">
    <location>
        <position position="2593"/>
    </location>
    <ligand>
        <name>S-adenosyl-L-methionine</name>
        <dbReference type="ChEBI" id="CHEBI:59789"/>
    </ligand>
</feature>
<feature type="binding site" evidence="17">
    <location>
        <position position="2594"/>
    </location>
    <ligand>
        <name>S-adenosyl-L-methionine</name>
        <dbReference type="ChEBI" id="CHEBI:59789"/>
    </ligand>
</feature>
<feature type="binding site" evidence="17">
    <location>
        <position position="2611"/>
    </location>
    <ligand>
        <name>S-adenosyl-L-methionine</name>
        <dbReference type="ChEBI" id="CHEBI:59789"/>
    </ligand>
</feature>
<feature type="binding site" evidence="17">
    <location>
        <position position="2612"/>
    </location>
    <ligand>
        <name>S-adenosyl-L-methionine</name>
        <dbReference type="ChEBI" id="CHEBI:59789"/>
    </ligand>
</feature>
<feature type="binding site" evidence="17">
    <location>
        <position position="2638"/>
    </location>
    <ligand>
        <name>S-adenosyl-L-methionine</name>
        <dbReference type="ChEBI" id="CHEBI:59789"/>
    </ligand>
</feature>
<feature type="binding site" evidence="17">
    <location>
        <position position="2639"/>
    </location>
    <ligand>
        <name>S-adenosyl-L-methionine</name>
        <dbReference type="ChEBI" id="CHEBI:59789"/>
    </ligand>
</feature>
<feature type="binding site" evidence="17">
    <location>
        <position position="2654"/>
    </location>
    <ligand>
        <name>S-adenosyl-L-methionine</name>
        <dbReference type="ChEBI" id="CHEBI:59789"/>
    </ligand>
</feature>
<feature type="binding site" evidence="17">
    <location>
        <position position="2727"/>
    </location>
    <ligand>
        <name>S-adenosyl-L-methionine</name>
        <dbReference type="ChEBI" id="CHEBI:59789"/>
    </ligand>
</feature>
<feature type="binding site" evidence="3">
    <location>
        <position position="2946"/>
    </location>
    <ligand>
        <name>Zn(2+)</name>
        <dbReference type="ChEBI" id="CHEBI:29105"/>
        <label>1</label>
    </ligand>
</feature>
<feature type="binding site" evidence="3">
    <location>
        <position position="2950"/>
    </location>
    <ligand>
        <name>Zn(2+)</name>
        <dbReference type="ChEBI" id="CHEBI:29105"/>
        <label>1</label>
    </ligand>
</feature>
<feature type="binding site" evidence="3">
    <location>
        <position position="2955"/>
    </location>
    <ligand>
        <name>Zn(2+)</name>
        <dbReference type="ChEBI" id="CHEBI:29105"/>
        <label>1</label>
    </ligand>
</feature>
<feature type="binding site" evidence="3">
    <location>
        <position position="2958"/>
    </location>
    <ligand>
        <name>Zn(2+)</name>
        <dbReference type="ChEBI" id="CHEBI:29105"/>
        <label>1</label>
    </ligand>
</feature>
<feature type="binding site" evidence="3">
    <location>
        <position position="3223"/>
    </location>
    <ligand>
        <name>Zn(2+)</name>
        <dbReference type="ChEBI" id="CHEBI:29105"/>
        <label>2</label>
    </ligand>
</feature>
<feature type="binding site" evidence="3">
    <location>
        <position position="3239"/>
    </location>
    <ligand>
        <name>Zn(2+)</name>
        <dbReference type="ChEBI" id="CHEBI:29105"/>
        <label>2</label>
    </ligand>
</feature>
<feature type="binding site" evidence="3">
    <location>
        <position position="3358"/>
    </location>
    <ligand>
        <name>Zn(2+)</name>
        <dbReference type="ChEBI" id="CHEBI:29105"/>
        <label>2</label>
    </ligand>
</feature>
<feature type="site" description="Cleavage; by viral protease NS3" evidence="2">
    <location>
        <begin position="101"/>
        <end position="102"/>
    </location>
</feature>
<feature type="site" description="Cleavage; by host signal peptidase" evidence="2">
    <location>
        <begin position="121"/>
        <end position="122"/>
    </location>
</feature>
<feature type="site" description="Cleavage; by host furin" evidence="7">
    <location>
        <begin position="210"/>
        <end position="211"/>
    </location>
</feature>
<feature type="site" description="Cleavage; by host signal peptidase" evidence="7">
    <location>
        <begin position="285"/>
        <end position="286"/>
    </location>
</feature>
<feature type="site" description="Cleavage; by host signal peptidase" evidence="2">
    <location>
        <begin position="778"/>
        <end position="779"/>
    </location>
</feature>
<feature type="site" description="Cleavage; by host" evidence="7">
    <location>
        <begin position="1130"/>
        <end position="1131"/>
    </location>
</feature>
<feature type="site" description="Cleavage; by viral protease NS3" evidence="7">
    <location>
        <begin position="1354"/>
        <end position="1355"/>
    </location>
</feature>
<feature type="site" description="Cleavage; by autolysis" evidence="2">
    <location>
        <begin position="1484"/>
        <end position="1485"/>
    </location>
</feature>
<feature type="site" description="Involved in NS3 ATPase and RTPase activities" evidence="3">
    <location>
        <position position="1945"/>
    </location>
</feature>
<feature type="site" description="Involved in NS3 ATPase and RTPase activities" evidence="3">
    <location>
        <position position="1948"/>
    </location>
</feature>
<feature type="site" description="Cleavage; by autolysis" evidence="2">
    <location>
        <begin position="2107"/>
        <end position="2108"/>
    </location>
</feature>
<feature type="site" description="Cleavage; by viral protease NS3" evidence="7">
    <location>
        <begin position="2233"/>
        <end position="2234"/>
    </location>
</feature>
<feature type="site" description="Cleavage; by host signal peptidase" evidence="7">
    <location>
        <begin position="2256"/>
        <end position="2257"/>
    </location>
</feature>
<feature type="site" description="Cleavage; by viral protease NS3" evidence="2">
    <location>
        <begin position="2507"/>
        <end position="2508"/>
    </location>
</feature>
<feature type="site" description="mRNA cap binding" evidence="17">
    <location>
        <position position="2520"/>
    </location>
</feature>
<feature type="site" description="mRNA cap binding; via carbonyl oxygen" evidence="17">
    <location>
        <position position="2523"/>
    </location>
</feature>
<feature type="site" description="mRNA cap binding" evidence="17">
    <location>
        <position position="2524"/>
    </location>
</feature>
<feature type="site" description="mRNA cap binding; via carbonyl oxygen" evidence="17">
    <location>
        <position position="2526"/>
    </location>
</feature>
<feature type="site" description="mRNA cap binding" evidence="17">
    <location>
        <position position="2531"/>
    </location>
</feature>
<feature type="site" description="mRNA cap binding" evidence="17">
    <location>
        <position position="2535"/>
    </location>
</feature>
<feature type="site" description="Essential for 2'-O-methyltransferase activity" evidence="17">
    <location>
        <position position="2568"/>
    </location>
</feature>
<feature type="site" description="Essential for 2'-O-methyltransferase and N-7 methyltransferase activity" evidence="17">
    <location>
        <position position="2653"/>
    </location>
</feature>
<feature type="site" description="mRNA cap binding" evidence="17">
    <location>
        <position position="2657"/>
    </location>
</feature>
<feature type="site" description="Essential for 2'-O-methyltransferase activity" evidence="17">
    <location>
        <position position="2689"/>
    </location>
</feature>
<feature type="site" description="mRNA cap binding" evidence="17">
    <location>
        <position position="2720"/>
    </location>
</feature>
<feature type="site" description="mRNA cap binding" evidence="17">
    <location>
        <position position="2722"/>
    </location>
</feature>
<feature type="site" description="Essential for 2'-O-methyltransferase activity" evidence="17">
    <location>
        <position position="2725"/>
    </location>
</feature>
<feature type="modified residue" description="N6-acetyllysine; by host" evidence="8">
    <location>
        <position position="1877"/>
    </location>
</feature>
<feature type="modified residue" description="Phosphoserine" evidence="2">
    <location>
        <position position="2563"/>
    </location>
</feature>
<feature type="glycosylation site" description="N-linked (GlcNAc...) asparagine; by host" evidence="11">
    <location>
        <position position="134"/>
    </location>
</feature>
<feature type="glycosylation site" description="N-linked (GlcNAc...) asparagine; by host" evidence="11">
    <location>
        <position position="150"/>
    </location>
</feature>
<feature type="glycosylation site" description="N-linked (GlcNAc...) asparagine; by host" evidence="11">
    <location>
        <position position="908"/>
    </location>
</feature>
<feature type="glycosylation site" description="N-linked (GlcNAc...) asparagine; by host" evidence="11">
    <location>
        <position position="986"/>
    </location>
</feature>
<feature type="disulfide bond" evidence="6">
    <location>
        <begin position="288"/>
        <end position="315"/>
    </location>
</feature>
<feature type="disulfide bond" evidence="6">
    <location>
        <begin position="345"/>
        <end position="406"/>
    </location>
</feature>
<feature type="disulfide bond" evidence="1">
    <location>
        <begin position="345"/>
        <end position="401"/>
    </location>
</feature>
<feature type="disulfide bond" evidence="6">
    <location>
        <begin position="359"/>
        <end position="390"/>
    </location>
</feature>
<feature type="disulfide bond" evidence="1">
    <location>
        <begin position="377"/>
        <end position="406"/>
    </location>
</feature>
<feature type="disulfide bond" evidence="6">
    <location>
        <begin position="377"/>
        <end position="401"/>
    </location>
</feature>
<feature type="disulfide bond" evidence="6">
    <location>
        <begin position="467"/>
        <end position="568"/>
    </location>
</feature>
<feature type="disulfide bond" evidence="6">
    <location>
        <begin position="585"/>
        <end position="615"/>
    </location>
</feature>
<feature type="disulfide bond" evidence="6">
    <location>
        <begin position="782"/>
        <end position="793"/>
    </location>
</feature>
<feature type="disulfide bond" evidence="6">
    <location>
        <begin position="833"/>
        <end position="921"/>
    </location>
</feature>
<feature type="disulfide bond" evidence="6">
    <location>
        <begin position="957"/>
        <end position="1002"/>
    </location>
</feature>
<feature type="disulfide bond" evidence="6">
    <location>
        <begin position="1058"/>
        <end position="1107"/>
    </location>
</feature>
<feature type="disulfide bond" evidence="6">
    <location>
        <begin position="1069"/>
        <end position="1091"/>
    </location>
</feature>
<feature type="disulfide bond" evidence="6">
    <location>
        <begin position="1090"/>
        <end position="1094"/>
    </location>
</feature>
<feature type="strand" evidence="21">
    <location>
        <begin position="288"/>
        <end position="290"/>
    </location>
</feature>
<feature type="strand" evidence="21">
    <location>
        <begin position="296"/>
        <end position="298"/>
    </location>
</feature>
<feature type="strand" evidence="21">
    <location>
        <begin position="300"/>
        <end position="310"/>
    </location>
</feature>
<feature type="strand" evidence="21">
    <location>
        <begin position="315"/>
        <end position="318"/>
    </location>
</feature>
<feature type="strand" evidence="21">
    <location>
        <begin position="326"/>
        <end position="337"/>
    </location>
</feature>
<feature type="strand" evidence="21">
    <location>
        <begin position="339"/>
        <end position="350"/>
    </location>
</feature>
<feature type="strand" evidence="21">
    <location>
        <begin position="354"/>
        <end position="357"/>
    </location>
</feature>
<feature type="helix" evidence="21">
    <location>
        <begin position="368"/>
        <end position="371"/>
    </location>
</feature>
<feature type="strand" evidence="21">
    <location>
        <begin position="375"/>
        <end position="384"/>
    </location>
</feature>
<feature type="helix" evidence="21">
    <location>
        <begin position="386"/>
        <end position="388"/>
    </location>
</feature>
<feature type="strand" evidence="21">
    <location>
        <begin position="394"/>
        <end position="414"/>
    </location>
</feature>
<feature type="strand" evidence="21">
    <location>
        <begin position="421"/>
        <end position="428"/>
    </location>
</feature>
<feature type="strand" evidence="21">
    <location>
        <begin position="440"/>
        <end position="449"/>
    </location>
</feature>
<feature type="strand" evidence="21">
    <location>
        <begin position="452"/>
        <end position="457"/>
    </location>
</feature>
<feature type="turn" evidence="21">
    <location>
        <begin position="458"/>
        <end position="460"/>
    </location>
</feature>
<feature type="strand" evidence="21">
    <location>
        <begin position="461"/>
        <end position="467"/>
    </location>
</feature>
<feature type="turn" evidence="21">
    <location>
        <begin position="475"/>
        <end position="477"/>
    </location>
</feature>
<feature type="strand" evidence="21">
    <location>
        <begin position="478"/>
        <end position="485"/>
    </location>
</feature>
<feature type="strand" evidence="21">
    <location>
        <begin position="487"/>
        <end position="491"/>
    </location>
</feature>
<feature type="helix" evidence="21">
    <location>
        <begin position="492"/>
        <end position="496"/>
    </location>
</feature>
<feature type="strand" evidence="21">
    <location>
        <begin position="502"/>
        <end position="504"/>
    </location>
</feature>
<feature type="helix" evidence="21">
    <location>
        <begin position="513"/>
        <end position="515"/>
    </location>
</feature>
<feature type="strand" evidence="21">
    <location>
        <begin position="517"/>
        <end position="519"/>
    </location>
</feature>
<feature type="strand" evidence="21">
    <location>
        <begin position="529"/>
        <end position="531"/>
    </location>
</feature>
<feature type="helix" evidence="21">
    <location>
        <begin position="536"/>
        <end position="542"/>
    </location>
</feature>
<feature type="turn" evidence="21">
    <location>
        <begin position="543"/>
        <end position="545"/>
    </location>
</feature>
<feature type="turn" evidence="21">
    <location>
        <begin position="553"/>
        <end position="555"/>
    </location>
</feature>
<feature type="strand" evidence="21">
    <location>
        <begin position="556"/>
        <end position="561"/>
    </location>
</feature>
<feature type="strand" evidence="21">
    <location>
        <begin position="565"/>
        <end position="574"/>
    </location>
</feature>
<feature type="strand" evidence="21">
    <location>
        <begin position="590"/>
        <end position="597"/>
    </location>
</feature>
<feature type="strand" evidence="21">
    <location>
        <begin position="599"/>
        <end position="601"/>
    </location>
</feature>
<feature type="strand" evidence="21">
    <location>
        <begin position="603"/>
        <end position="612"/>
    </location>
</feature>
<feature type="strand" evidence="21">
    <location>
        <begin position="614"/>
        <end position="616"/>
    </location>
</feature>
<feature type="strand" evidence="21">
    <location>
        <begin position="619"/>
        <end position="627"/>
    </location>
</feature>
<feature type="strand" evidence="21">
    <location>
        <begin position="632"/>
        <end position="634"/>
    </location>
</feature>
<feature type="strand" evidence="21">
    <location>
        <begin position="640"/>
        <end position="643"/>
    </location>
</feature>
<feature type="strand" evidence="21">
    <location>
        <begin position="646"/>
        <end position="653"/>
    </location>
</feature>
<feature type="strand" evidence="21">
    <location>
        <begin position="656"/>
        <end position="668"/>
    </location>
</feature>
<feature type="strand" evidence="21">
    <location>
        <begin position="670"/>
        <end position="676"/>
    </location>
</feature>
<feature type="helix" evidence="20">
    <location>
        <begin position="959"/>
        <end position="961"/>
    </location>
</feature>
<feature type="strand" evidence="20">
    <location>
        <begin position="963"/>
        <end position="967"/>
    </location>
</feature>
<feature type="strand" evidence="20">
    <location>
        <begin position="970"/>
        <end position="975"/>
    </location>
</feature>
<feature type="strand" evidence="20">
    <location>
        <begin position="978"/>
        <end position="985"/>
    </location>
</feature>
<feature type="strand" evidence="20">
    <location>
        <begin position="988"/>
        <end position="997"/>
    </location>
</feature>
<feature type="helix" evidence="20">
    <location>
        <begin position="1006"/>
        <end position="1008"/>
    </location>
</feature>
<feature type="helix" evidence="20">
    <location>
        <begin position="1016"/>
        <end position="1018"/>
    </location>
</feature>
<feature type="helix" evidence="20">
    <location>
        <begin position="1023"/>
        <end position="1025"/>
    </location>
</feature>
<feature type="strand" evidence="20">
    <location>
        <begin position="1050"/>
        <end position="1056"/>
    </location>
</feature>
<feature type="strand" evidence="20">
    <location>
        <begin position="1062"/>
        <end position="1065"/>
    </location>
</feature>
<feature type="strand" evidence="20">
    <location>
        <begin position="1076"/>
        <end position="1079"/>
    </location>
</feature>
<feature type="strand" evidence="20">
    <location>
        <begin position="1088"/>
        <end position="1093"/>
    </location>
</feature>
<feature type="strand" evidence="20">
    <location>
        <begin position="1099"/>
        <end position="1103"/>
    </location>
</feature>
<feature type="strand" evidence="20">
    <location>
        <begin position="1106"/>
        <end position="1109"/>
    </location>
</feature>
<dbReference type="EC" id="3.4.21.91"/>
<dbReference type="EC" id="3.6.1.15" evidence="10"/>
<dbReference type="EC" id="3.6.4.13" evidence="10"/>
<dbReference type="EC" id="2.1.1.56" evidence="17"/>
<dbReference type="EC" id="2.1.1.57" evidence="17"/>
<dbReference type="EC" id="2.7.7.48" evidence="12"/>
<dbReference type="EMBL" id="AY968064">
    <property type="protein sequence ID" value="AAY34247.1"/>
    <property type="molecule type" value="Genomic_RNA"/>
</dbReference>
<dbReference type="PDB" id="5YXA">
    <property type="method" value="X-ray"/>
    <property type="resolution" value="2.10 A"/>
    <property type="chains" value="A/B/C/D=950-1130"/>
</dbReference>
<dbReference type="PDB" id="8GPT">
    <property type="method" value="X-ray"/>
    <property type="resolution" value="3.07 A"/>
    <property type="chains" value="A/B/C=286-683"/>
</dbReference>
<dbReference type="PDB" id="8GPX">
    <property type="method" value="X-ray"/>
    <property type="resolution" value="3.80 A"/>
    <property type="chains" value="E=286-683"/>
</dbReference>
<dbReference type="PDBsum" id="5YXA"/>
<dbReference type="PDBsum" id="8GPT"/>
<dbReference type="PDBsum" id="8GPX"/>
<dbReference type="BMRB" id="Q1X881"/>
<dbReference type="SMR" id="Q1X881"/>
<dbReference type="MEROPS" id="S07.001"/>
<dbReference type="Proteomes" id="UP000008607">
    <property type="component" value="Genome"/>
</dbReference>
<dbReference type="GO" id="GO:0005576">
    <property type="term" value="C:extracellular region"/>
    <property type="evidence" value="ECO:0007669"/>
    <property type="project" value="UniProtKB-SubCell"/>
</dbReference>
<dbReference type="GO" id="GO:0044167">
    <property type="term" value="C:host cell endoplasmic reticulum membrane"/>
    <property type="evidence" value="ECO:0007669"/>
    <property type="project" value="UniProtKB-SubCell"/>
</dbReference>
<dbReference type="GO" id="GO:0042025">
    <property type="term" value="C:host cell nucleus"/>
    <property type="evidence" value="ECO:0007669"/>
    <property type="project" value="UniProtKB-SubCell"/>
</dbReference>
<dbReference type="GO" id="GO:0044220">
    <property type="term" value="C:host cell perinuclear region of cytoplasm"/>
    <property type="evidence" value="ECO:0007669"/>
    <property type="project" value="UniProtKB-SubCell"/>
</dbReference>
<dbReference type="GO" id="GO:0016020">
    <property type="term" value="C:membrane"/>
    <property type="evidence" value="ECO:0007669"/>
    <property type="project" value="UniProtKB-KW"/>
</dbReference>
<dbReference type="GO" id="GO:0019028">
    <property type="term" value="C:viral capsid"/>
    <property type="evidence" value="ECO:0007669"/>
    <property type="project" value="UniProtKB-KW"/>
</dbReference>
<dbReference type="GO" id="GO:0019031">
    <property type="term" value="C:viral envelope"/>
    <property type="evidence" value="ECO:0007669"/>
    <property type="project" value="UniProtKB-KW"/>
</dbReference>
<dbReference type="GO" id="GO:0055036">
    <property type="term" value="C:virion membrane"/>
    <property type="evidence" value="ECO:0007669"/>
    <property type="project" value="UniProtKB-SubCell"/>
</dbReference>
<dbReference type="GO" id="GO:0005524">
    <property type="term" value="F:ATP binding"/>
    <property type="evidence" value="ECO:0007669"/>
    <property type="project" value="UniProtKB-KW"/>
</dbReference>
<dbReference type="GO" id="GO:0016887">
    <property type="term" value="F:ATP hydrolysis activity"/>
    <property type="evidence" value="ECO:0007669"/>
    <property type="project" value="RHEA"/>
</dbReference>
<dbReference type="GO" id="GO:0003725">
    <property type="term" value="F:double-stranded RNA binding"/>
    <property type="evidence" value="ECO:0007669"/>
    <property type="project" value="InterPro"/>
</dbReference>
<dbReference type="GO" id="GO:0005525">
    <property type="term" value="F:GTP binding"/>
    <property type="evidence" value="ECO:0007669"/>
    <property type="project" value="UniProtKB-KW"/>
</dbReference>
<dbReference type="GO" id="GO:0046872">
    <property type="term" value="F:metal ion binding"/>
    <property type="evidence" value="ECO:0007669"/>
    <property type="project" value="UniProtKB-KW"/>
</dbReference>
<dbReference type="GO" id="GO:0004483">
    <property type="term" value="F:mRNA (nucleoside-2'-O-)-methyltransferase activity"/>
    <property type="evidence" value="ECO:0007669"/>
    <property type="project" value="UniProtKB-EC"/>
</dbReference>
<dbReference type="GO" id="GO:0004482">
    <property type="term" value="F:mRNA 5'-cap (guanine-N7-)-methyltransferase activity"/>
    <property type="evidence" value="ECO:0007669"/>
    <property type="project" value="UniProtKB-EC"/>
</dbReference>
<dbReference type="GO" id="GO:0046983">
    <property type="term" value="F:protein dimerization activity"/>
    <property type="evidence" value="ECO:0007669"/>
    <property type="project" value="InterPro"/>
</dbReference>
<dbReference type="GO" id="GO:0003724">
    <property type="term" value="F:RNA helicase activity"/>
    <property type="evidence" value="ECO:0007669"/>
    <property type="project" value="UniProtKB-EC"/>
</dbReference>
<dbReference type="GO" id="GO:0003968">
    <property type="term" value="F:RNA-directed RNA polymerase activity"/>
    <property type="evidence" value="ECO:0007669"/>
    <property type="project" value="UniProtKB-KW"/>
</dbReference>
<dbReference type="GO" id="GO:0004252">
    <property type="term" value="F:serine-type endopeptidase activity"/>
    <property type="evidence" value="ECO:0007669"/>
    <property type="project" value="InterPro"/>
</dbReference>
<dbReference type="GO" id="GO:0005198">
    <property type="term" value="F:structural molecule activity"/>
    <property type="evidence" value="ECO:0007669"/>
    <property type="project" value="InterPro"/>
</dbReference>
<dbReference type="GO" id="GO:0075512">
    <property type="term" value="P:clathrin-dependent endocytosis of virus by host cell"/>
    <property type="evidence" value="ECO:0007669"/>
    <property type="project" value="UniProtKB-KW"/>
</dbReference>
<dbReference type="GO" id="GO:0039654">
    <property type="term" value="P:fusion of virus membrane with host endosome membrane"/>
    <property type="evidence" value="ECO:0007669"/>
    <property type="project" value="UniProtKB-KW"/>
</dbReference>
<dbReference type="GO" id="GO:0006508">
    <property type="term" value="P:proteolysis"/>
    <property type="evidence" value="ECO:0007669"/>
    <property type="project" value="UniProtKB-KW"/>
</dbReference>
<dbReference type="GO" id="GO:0039520">
    <property type="term" value="P:symbiont-mediated activation of host autophagy"/>
    <property type="evidence" value="ECO:0007669"/>
    <property type="project" value="UniProtKB-KW"/>
</dbReference>
<dbReference type="GO" id="GO:0052170">
    <property type="term" value="P:symbiont-mediated suppression of host innate immune response"/>
    <property type="evidence" value="ECO:0007669"/>
    <property type="project" value="UniProtKB-KW"/>
</dbReference>
<dbReference type="GO" id="GO:0039564">
    <property type="term" value="P:symbiont-mediated suppression of host JAK-STAT cascade via inhibition of STAT2 activity"/>
    <property type="evidence" value="ECO:0007669"/>
    <property type="project" value="UniProtKB-KW"/>
</dbReference>
<dbReference type="GO" id="GO:0039502">
    <property type="term" value="P:symbiont-mediated suppression of host type I interferon-mediated signaling pathway"/>
    <property type="evidence" value="ECO:0007669"/>
    <property type="project" value="UniProtKB-KW"/>
</dbReference>
<dbReference type="GO" id="GO:0039694">
    <property type="term" value="P:viral RNA genome replication"/>
    <property type="evidence" value="ECO:0007669"/>
    <property type="project" value="InterPro"/>
</dbReference>
<dbReference type="GO" id="GO:0019062">
    <property type="term" value="P:virion attachment to host cell"/>
    <property type="evidence" value="ECO:0007669"/>
    <property type="project" value="UniProtKB-KW"/>
</dbReference>
<dbReference type="CDD" id="cd20761">
    <property type="entry name" value="capping_2-OMTase_Flaviviridae"/>
    <property type="match status" value="1"/>
</dbReference>
<dbReference type="CDD" id="cd17931">
    <property type="entry name" value="DEXHc_viral_Ns3"/>
    <property type="match status" value="1"/>
</dbReference>
<dbReference type="CDD" id="cd12149">
    <property type="entry name" value="Flavi_E_C"/>
    <property type="match status" value="1"/>
</dbReference>
<dbReference type="CDD" id="cd17038">
    <property type="entry name" value="Flavi_M"/>
    <property type="match status" value="1"/>
</dbReference>
<dbReference type="CDD" id="cd23204">
    <property type="entry name" value="Flavivirus_RdRp"/>
    <property type="match status" value="1"/>
</dbReference>
<dbReference type="FunFam" id="1.20.1280.260:FF:000001">
    <property type="entry name" value="Envelope glycoprotein"/>
    <property type="match status" value="1"/>
</dbReference>
<dbReference type="FunFam" id="2.60.260.50:FF:000001">
    <property type="entry name" value="Genome polyprotein"/>
    <property type="match status" value="1"/>
</dbReference>
<dbReference type="FunFam" id="3.30.70.2840:FF:000002">
    <property type="entry name" value="Genome polyprotein"/>
    <property type="match status" value="1"/>
</dbReference>
<dbReference type="FunFam" id="3.40.50.150:FF:000105">
    <property type="entry name" value="Genome polyprotein"/>
    <property type="match status" value="1"/>
</dbReference>
<dbReference type="Gene3D" id="1.10.10.930">
    <property type="match status" value="1"/>
</dbReference>
<dbReference type="Gene3D" id="1.10.260.90">
    <property type="match status" value="1"/>
</dbReference>
<dbReference type="Gene3D" id="1.20.1280.260">
    <property type="match status" value="1"/>
</dbReference>
<dbReference type="Gene3D" id="2.40.10.120">
    <property type="match status" value="2"/>
</dbReference>
<dbReference type="Gene3D" id="2.60.40.350">
    <property type="match status" value="1"/>
</dbReference>
<dbReference type="Gene3D" id="1.10.8.970">
    <property type="entry name" value="Flavivirus envelope glycoprotein M-like"/>
    <property type="match status" value="1"/>
</dbReference>
<dbReference type="Gene3D" id="2.60.260.50">
    <property type="entry name" value="Flavivirus polyprotein propeptide domain"/>
    <property type="match status" value="1"/>
</dbReference>
<dbReference type="Gene3D" id="3.30.70.2840">
    <property type="entry name" value="Flavivirus RNA-directed RNA polymerase, thumb domain"/>
    <property type="match status" value="3"/>
</dbReference>
<dbReference type="Gene3D" id="3.40.50.300">
    <property type="entry name" value="P-loop containing nucleotide triphosphate hydrolases"/>
    <property type="match status" value="2"/>
</dbReference>
<dbReference type="Gene3D" id="2.60.98.10">
    <property type="entry name" value="Tick-borne Encephalitis virus Glycoprotein, domain 1"/>
    <property type="match status" value="1"/>
</dbReference>
<dbReference type="Gene3D" id="3.40.50.150">
    <property type="entry name" value="Vaccinia Virus protein VP39"/>
    <property type="match status" value="1"/>
</dbReference>
<dbReference type="Gene3D" id="3.30.67.10">
    <property type="entry name" value="Viral Envelope Glycoprotein, domain 2"/>
    <property type="match status" value="1"/>
</dbReference>
<dbReference type="Gene3D" id="3.30.387.10">
    <property type="entry name" value="Viral Envelope Glycoprotein, domain 3"/>
    <property type="match status" value="1"/>
</dbReference>
<dbReference type="InterPro" id="IPR043502">
    <property type="entry name" value="DNA/RNA_pol_sf"/>
</dbReference>
<dbReference type="InterPro" id="IPR000069">
    <property type="entry name" value="Env_glycoprot_M_flavivir"/>
</dbReference>
<dbReference type="InterPro" id="IPR038302">
    <property type="entry name" value="Env_glycoprot_M_sf_flavivir"/>
</dbReference>
<dbReference type="InterPro" id="IPR013755">
    <property type="entry name" value="Flav_gly_cen_dom_subdom1"/>
</dbReference>
<dbReference type="InterPro" id="IPR001122">
    <property type="entry name" value="Flavi_capsidC"/>
</dbReference>
<dbReference type="InterPro" id="IPR037172">
    <property type="entry name" value="Flavi_capsidC_sf"/>
</dbReference>
<dbReference type="InterPro" id="IPR011492">
    <property type="entry name" value="Flavi_DEAD"/>
</dbReference>
<dbReference type="InterPro" id="IPR027287">
    <property type="entry name" value="Flavi_E_Ig-like"/>
</dbReference>
<dbReference type="InterPro" id="IPR026470">
    <property type="entry name" value="Flavi_E_Stem/Anchor_dom"/>
</dbReference>
<dbReference type="InterPro" id="IPR038345">
    <property type="entry name" value="Flavi_E_Stem/Anchor_dom_sf"/>
</dbReference>
<dbReference type="InterPro" id="IPR011998">
    <property type="entry name" value="Flavi_Glycoprot_E_cen/dimer"/>
</dbReference>
<dbReference type="InterPro" id="IPR001157">
    <property type="entry name" value="Flavi_NS1"/>
</dbReference>
<dbReference type="InterPro" id="IPR000752">
    <property type="entry name" value="Flavi_NS2A"/>
</dbReference>
<dbReference type="InterPro" id="IPR000487">
    <property type="entry name" value="Flavi_NS2B"/>
</dbReference>
<dbReference type="InterPro" id="IPR001850">
    <property type="entry name" value="Flavi_NS3_S7"/>
</dbReference>
<dbReference type="InterPro" id="IPR000404">
    <property type="entry name" value="Flavi_NS4A"/>
</dbReference>
<dbReference type="InterPro" id="IPR001528">
    <property type="entry name" value="Flavi_NS4B"/>
</dbReference>
<dbReference type="InterPro" id="IPR046811">
    <property type="entry name" value="Flavi_NS5_thumb"/>
</dbReference>
<dbReference type="InterPro" id="IPR002535">
    <property type="entry name" value="Flavi_propep"/>
</dbReference>
<dbReference type="InterPro" id="IPR038688">
    <property type="entry name" value="Flavi_propep_sf"/>
</dbReference>
<dbReference type="InterPro" id="IPR047530">
    <property type="entry name" value="Flavi_RdRp"/>
</dbReference>
<dbReference type="InterPro" id="IPR000208">
    <property type="entry name" value="Flavi_RdRp_fingers/palm"/>
</dbReference>
<dbReference type="InterPro" id="IPR000336">
    <property type="entry name" value="Flavivir/Alphavir_Ig-like_sf"/>
</dbReference>
<dbReference type="InterPro" id="IPR014412">
    <property type="entry name" value="Gen_Poly_FLV"/>
</dbReference>
<dbReference type="InterPro" id="IPR036253">
    <property type="entry name" value="Glycoprot_cen/dimer_sf"/>
</dbReference>
<dbReference type="InterPro" id="IPR038055">
    <property type="entry name" value="Glycoprot_E_dimer_dom"/>
</dbReference>
<dbReference type="InterPro" id="IPR013756">
    <property type="entry name" value="GlyE_cen_dom_subdom2"/>
</dbReference>
<dbReference type="InterPro" id="IPR014001">
    <property type="entry name" value="Helicase_ATP-bd"/>
</dbReference>
<dbReference type="InterPro" id="IPR001650">
    <property type="entry name" value="Helicase_C-like"/>
</dbReference>
<dbReference type="InterPro" id="IPR014756">
    <property type="entry name" value="Ig_E-set"/>
</dbReference>
<dbReference type="InterPro" id="IPR026490">
    <property type="entry name" value="mRNA_cap_0/1_MeTrfase"/>
</dbReference>
<dbReference type="InterPro" id="IPR049486">
    <property type="entry name" value="NS3-hel_C_flaviviridae"/>
</dbReference>
<dbReference type="InterPro" id="IPR027417">
    <property type="entry name" value="P-loop_NTPase"/>
</dbReference>
<dbReference type="InterPro" id="IPR009003">
    <property type="entry name" value="Peptidase_S1_PA"/>
</dbReference>
<dbReference type="InterPro" id="IPR007094">
    <property type="entry name" value="RNA-dir_pol_PSvirus"/>
</dbReference>
<dbReference type="InterPro" id="IPR002877">
    <property type="entry name" value="RNA_MeTrfase_FtsJ_dom"/>
</dbReference>
<dbReference type="InterPro" id="IPR029063">
    <property type="entry name" value="SAM-dependent_MTases_sf"/>
</dbReference>
<dbReference type="NCBIfam" id="TIGR04240">
    <property type="entry name" value="flavi_E_stem"/>
    <property type="match status" value="1"/>
</dbReference>
<dbReference type="Pfam" id="PF20907">
    <property type="entry name" value="Flav_NS3-hel_C"/>
    <property type="match status" value="1"/>
</dbReference>
<dbReference type="Pfam" id="PF01003">
    <property type="entry name" value="Flavi_capsid"/>
    <property type="match status" value="1"/>
</dbReference>
<dbReference type="Pfam" id="PF07652">
    <property type="entry name" value="Flavi_DEAD"/>
    <property type="match status" value="1"/>
</dbReference>
<dbReference type="Pfam" id="PF21659">
    <property type="entry name" value="Flavi_E_stem"/>
    <property type="match status" value="1"/>
</dbReference>
<dbReference type="Pfam" id="PF02832">
    <property type="entry name" value="Flavi_glycop_C"/>
    <property type="match status" value="1"/>
</dbReference>
<dbReference type="Pfam" id="PF00869">
    <property type="entry name" value="Flavi_glycoprot"/>
    <property type="match status" value="1"/>
</dbReference>
<dbReference type="Pfam" id="PF01004">
    <property type="entry name" value="Flavi_M"/>
    <property type="match status" value="1"/>
</dbReference>
<dbReference type="Pfam" id="PF00948">
    <property type="entry name" value="Flavi_NS1"/>
    <property type="match status" value="1"/>
</dbReference>
<dbReference type="Pfam" id="PF01005">
    <property type="entry name" value="Flavi_NS2A"/>
    <property type="match status" value="1"/>
</dbReference>
<dbReference type="Pfam" id="PF01002">
    <property type="entry name" value="Flavi_NS2B"/>
    <property type="match status" value="1"/>
</dbReference>
<dbReference type="Pfam" id="PF01350">
    <property type="entry name" value="Flavi_NS4A"/>
    <property type="match status" value="1"/>
</dbReference>
<dbReference type="Pfam" id="PF01349">
    <property type="entry name" value="Flavi_NS4B"/>
    <property type="match status" value="1"/>
</dbReference>
<dbReference type="Pfam" id="PF00972">
    <property type="entry name" value="Flavi_NS5"/>
    <property type="match status" value="1"/>
</dbReference>
<dbReference type="Pfam" id="PF20483">
    <property type="entry name" value="Flavi_NS5_thumb"/>
    <property type="match status" value="1"/>
</dbReference>
<dbReference type="Pfam" id="PF01570">
    <property type="entry name" value="Flavi_propep"/>
    <property type="match status" value="1"/>
</dbReference>
<dbReference type="Pfam" id="PF01728">
    <property type="entry name" value="FtsJ"/>
    <property type="match status" value="1"/>
</dbReference>
<dbReference type="Pfam" id="PF00949">
    <property type="entry name" value="Peptidase_S7"/>
    <property type="match status" value="1"/>
</dbReference>
<dbReference type="PIRSF" id="PIRSF003817">
    <property type="entry name" value="Gen_Poly_FLV"/>
    <property type="match status" value="1"/>
</dbReference>
<dbReference type="SMART" id="SM00487">
    <property type="entry name" value="DEXDc"/>
    <property type="match status" value="1"/>
</dbReference>
<dbReference type="SMART" id="SM00490">
    <property type="entry name" value="HELICc"/>
    <property type="match status" value="1"/>
</dbReference>
<dbReference type="SUPFAM" id="SSF56672">
    <property type="entry name" value="DNA/RNA polymerases"/>
    <property type="match status" value="1"/>
</dbReference>
<dbReference type="SUPFAM" id="SSF81296">
    <property type="entry name" value="E set domains"/>
    <property type="match status" value="1"/>
</dbReference>
<dbReference type="SUPFAM" id="SSF52540">
    <property type="entry name" value="P-loop containing nucleoside triphosphate hydrolases"/>
    <property type="match status" value="2"/>
</dbReference>
<dbReference type="SUPFAM" id="SSF53335">
    <property type="entry name" value="S-adenosyl-L-methionine-dependent methyltransferases"/>
    <property type="match status" value="1"/>
</dbReference>
<dbReference type="SUPFAM" id="SSF50494">
    <property type="entry name" value="Trypsin-like serine proteases"/>
    <property type="match status" value="1"/>
</dbReference>
<dbReference type="SUPFAM" id="SSF56983">
    <property type="entry name" value="Viral glycoprotein, central and dimerisation domains"/>
    <property type="match status" value="1"/>
</dbReference>
<dbReference type="PROSITE" id="PS51527">
    <property type="entry name" value="FLAVIVIRUS_NS2B"/>
    <property type="match status" value="1"/>
</dbReference>
<dbReference type="PROSITE" id="PS51528">
    <property type="entry name" value="FLAVIVIRUS_NS3PRO"/>
    <property type="match status" value="1"/>
</dbReference>
<dbReference type="PROSITE" id="PS51192">
    <property type="entry name" value="HELICASE_ATP_BIND_1"/>
    <property type="match status" value="1"/>
</dbReference>
<dbReference type="PROSITE" id="PS51194">
    <property type="entry name" value="HELICASE_CTER"/>
    <property type="match status" value="1"/>
</dbReference>
<dbReference type="PROSITE" id="PS50507">
    <property type="entry name" value="RDRP_SSRNA_POS"/>
    <property type="match status" value="1"/>
</dbReference>
<dbReference type="PROSITE" id="PS51591">
    <property type="entry name" value="RNA_CAP01_NS5_MT"/>
    <property type="match status" value="1"/>
</dbReference>
<organismHost>
    <name type="scientific">Aedes aegypti</name>
    <name type="common">Yellowfever mosquito</name>
    <name type="synonym">Culex aegypti</name>
    <dbReference type="NCBI Taxonomy" id="7159"/>
</organismHost>
<organismHost>
    <name type="scientific">Aedes luteocephalus</name>
    <name type="common">Mosquito</name>
    <dbReference type="NCBI Taxonomy" id="299629"/>
</organismHost>
<organismHost>
    <name type="scientific">Aedes simpsoni</name>
    <dbReference type="NCBI Taxonomy" id="7161"/>
</organismHost>
<organismHost>
    <name type="scientific">Homo sapiens</name>
    <name type="common">Human</name>
    <dbReference type="NCBI Taxonomy" id="9606"/>
</organismHost>
<organismHost>
    <name type="scientific">Simiiformes</name>
    <dbReference type="NCBI Taxonomy" id="314293"/>
</organismHost>
<protein>
    <recommendedName>
        <fullName>Genome polyprotein</fullName>
    </recommendedName>
    <component>
        <recommendedName>
            <fullName>Capsid protein C</fullName>
        </recommendedName>
        <alternativeName>
            <fullName>Core protein</fullName>
        </alternativeName>
    </component>
    <component>
        <recommendedName>
            <fullName>Protein prM</fullName>
        </recommendedName>
    </component>
    <component>
        <recommendedName>
            <fullName>Peptide pr</fullName>
        </recommendedName>
    </component>
    <component>
        <recommendedName>
            <fullName>Small envelope protein M</fullName>
        </recommendedName>
        <alternativeName>
            <fullName>Matrix protein</fullName>
        </alternativeName>
    </component>
    <component>
        <recommendedName>
            <fullName>Envelope protein E</fullName>
        </recommendedName>
    </component>
    <component>
        <recommendedName>
            <fullName>Non-structural protein 1</fullName>
            <shortName>NS1</shortName>
        </recommendedName>
    </component>
    <component>
        <recommendedName>
            <fullName>Non-structural protein 2A</fullName>
            <shortName>NS2A</shortName>
        </recommendedName>
    </component>
    <component>
        <recommendedName>
            <fullName>Non-structural protein 2A-alpha</fullName>
            <shortName>NS2A-alpha</shortName>
        </recommendedName>
    </component>
    <component>
        <recommendedName>
            <fullName>Serine protease subunit NS2B</fullName>
        </recommendedName>
        <alternativeName>
            <fullName>Flavivirin protease NS2B regulatory subunit</fullName>
        </alternativeName>
        <alternativeName>
            <fullName>Non-structural protein 2B</fullName>
        </alternativeName>
    </component>
    <component>
        <recommendedName>
            <fullName>Serine protease NS3</fullName>
            <ecNumber>3.4.21.91</ecNumber>
            <ecNumber evidence="10">3.6.1.15</ecNumber>
            <ecNumber evidence="10">3.6.4.13</ecNumber>
        </recommendedName>
        <alternativeName>
            <fullName>Flavivirin protease NS3 catalytic subunit</fullName>
        </alternativeName>
        <alternativeName>
            <fullName>Non-structural protein 3</fullName>
        </alternativeName>
    </component>
    <component>
        <recommendedName>
            <fullName>Non-structural protein 4A</fullName>
            <shortName>NS4A</shortName>
        </recommendedName>
    </component>
    <component>
        <recommendedName>
            <fullName>Peptide 2k</fullName>
        </recommendedName>
    </component>
    <component>
        <recommendedName>
            <fullName>Non-structural protein 4B</fullName>
            <shortName>NS4B</shortName>
        </recommendedName>
    </component>
    <component>
        <recommendedName>
            <fullName>RNA-directed RNA polymerase NS5</fullName>
            <ecNumber evidence="17">2.1.1.56</ecNumber>
            <ecNumber evidence="17">2.1.1.57</ecNumber>
            <ecNumber evidence="12">2.7.7.48</ecNumber>
        </recommendedName>
        <alternativeName>
            <fullName>Non-structural protein 5</fullName>
        </alternativeName>
    </component>
</protein>
<comment type="function">
    <molecule>Capsid protein C</molecule>
    <text evidence="6">Plays a role in virus budding by binding to the cell membrane and gathering the viral RNA into a nucleocapsid that forms the core of a mature virus particle. During virus entry, may induce genome penetration into the host cytoplasm after hemifusion induced by the surface proteins. Can migrate to the cell nucleus where it modulates host functions.</text>
</comment>
<comment type="function">
    <molecule>Capsid protein C</molecule>
    <text evidence="2">Inhibits RNA silencing by interfering with host Dicer.</text>
</comment>
<comment type="function">
    <molecule>Peptide pr</molecule>
    <text evidence="6">Prevents premature fusion activity of envelope proteins in trans-Golgi by binding to envelope protein E at pH6.0. After virion release in extracellular space, gets dissociated from E dimers.</text>
</comment>
<comment type="function">
    <molecule>Protein prM</molecule>
    <text evidence="6">Acts as a chaperone for envelope protein E during intracellular virion assembly by masking and inactivating envelope protein E fusion peptide. prM is the only viral peptide matured by host furin in the trans-Golgi network probably to avoid catastrophic activation of the viral fusion activity in acidic Golgi compartment prior to virion release. prM-E cleavage is inefficient, and many virions are only partially matured. These uncleaved prM would play a role in immune evasion.</text>
</comment>
<comment type="function">
    <molecule>Small envelope protein M</molecule>
    <text evidence="6">May play a role in virus budding. Exerts cytotoxic effects by activating a mitochondrial apoptotic pathway through M ectodomain. May display a viroporin activity.</text>
</comment>
<comment type="function">
    <molecule>Envelope protein E</molecule>
    <text evidence="6">Binds to host cell surface receptor and mediates fusion between viral and cellular membranes. Envelope protein is synthesized in the endoplasmic reticulum in the form of heterodimer with protein prM. They play a role in virion budding in the ER, and the newly formed immature particle is covered with 60 spikes composed of heterodimer between precursor prM and envelope protein E. The virion is transported to the Golgi apparatus where the low pH causes dissociation of PrM-E heterodimers and formation of E homodimers. prM-E cleavage is inefficient, and many virions are only partially matured. These uncleaved prM would play a role in immune evasion.</text>
</comment>
<comment type="function">
    <molecule>Non-structural protein 1</molecule>
    <text evidence="10">Involved in immune evasion, pathogenesis and viral replication. Once cleaved off the polyprotein, is targeted to three destinations: the viral replication cycle, the plasma membrane and the extracellular compartment. Essential for viral replication. Required for formation of the replication complex and recruitment of other non-structural proteins to the ER-derived membrane structures. Excreted as a hexameric lipoparticle that plays a role against host immune response. Antagonizing the complement function. Binds to the host macrophages and dendritic cells. Inhibits signal transduction originating from Toll-like receptor 3 (TLR3).</text>
</comment>
<comment type="function">
    <molecule>Non-structural protein 2A</molecule>
    <text evidence="6">Component of the viral RNA replication complex that functions in virion assembly and antagonizes the host immune response.</text>
</comment>
<comment type="function">
    <molecule>Serine protease subunit NS2B</molecule>
    <text evidence="6 15">Required cofactor for the serine protease function of NS3. May have membrane-destabilizing activity and form viroporins (By similarity).</text>
</comment>
<comment type="function">
    <molecule>Serine protease NS3</molecule>
    <text evidence="2 16">Displays three enzymatic activities: serine protease, NTPase and RNA helicase. NS3 serine protease, in association with NS2B, performs its autocleavage and cleaves the polyprotein at dibasic sites in the cytoplasm: C-prM, NS2A-NS2B, NS2B-NS3, NS3-NS4A, NS4A-2K and NS4B-NS5. NS3 RNA helicase binds RNA and unwinds dsRNA in the 3' to 5' direction. Also plays a role in virus assembly (By similarity).</text>
</comment>
<comment type="function">
    <molecule>Non-structural protein 4A</molecule>
    <text evidence="10">Regulates the ATPase activity of the NS3 helicase activity. NS4A allows NS3 helicase to conserve energy during unwinding.</text>
</comment>
<comment type="function">
    <molecule>Peptide 2k</molecule>
    <text evidence="6">Functions as a signal peptide for NS4B and is required for the interferon antagonism activity of the latter.</text>
</comment>
<comment type="function">
    <molecule>Non-structural protein 4B</molecule>
    <text evidence="10">Induces the formation of ER-derived membrane vesicles where the viral replication takes place. Inhibits interferon (IFN)-induced host STAT1 phosphorylation and nuclear translocation, thereby preventing the establishment of cellular antiviral state by blocking the IFN-alpha/beta pathway.</text>
</comment>
<comment type="function">
    <molecule>RNA-directed RNA polymerase NS5</molecule>
    <text evidence="2">Replicates the viral (+) and (-) RNA genome, and performs the capping of genomes in the cytoplasm. NS5 methylates viral RNA cap at guanine N-7 and ribose 2'-O positions (By similarity). Besides its role in RNA genome replication, also prevents the establishment of cellular antiviral state by blocking the interferon-alpha/beta (IFN-alpha/beta) signaling pathway. IFN-I induces binding of NS5 to host IFN-activated transcription factor STAT2, preventing its transcriptional activity. Host TRIM23 is the E3 ligase that interacts with and polyubiquitinates NS5 to promote its binding to STAT2 and trigger IFN-I signaling inhibition.</text>
</comment>
<comment type="catalytic activity">
    <reaction>
        <text>Selective hydrolysis of -Xaa-Xaa-|-Yaa- bonds in which each of the Xaa can be either Arg or Lys and Yaa can be either Ser or Ala.</text>
        <dbReference type="EC" id="3.4.21.91"/>
    </reaction>
</comment>
<comment type="catalytic activity">
    <reaction evidence="12">
        <text>RNA(n) + a ribonucleoside 5'-triphosphate = RNA(n+1) + diphosphate</text>
        <dbReference type="Rhea" id="RHEA:21248"/>
        <dbReference type="Rhea" id="RHEA-COMP:14527"/>
        <dbReference type="Rhea" id="RHEA-COMP:17342"/>
        <dbReference type="ChEBI" id="CHEBI:33019"/>
        <dbReference type="ChEBI" id="CHEBI:61557"/>
        <dbReference type="ChEBI" id="CHEBI:140395"/>
        <dbReference type="EC" id="2.7.7.48"/>
    </reaction>
</comment>
<comment type="catalytic activity">
    <reaction>
        <text>a ribonucleoside 5'-triphosphate + H2O = a ribonucleoside 5'-diphosphate + phosphate + H(+)</text>
        <dbReference type="Rhea" id="RHEA:23680"/>
        <dbReference type="ChEBI" id="CHEBI:15377"/>
        <dbReference type="ChEBI" id="CHEBI:15378"/>
        <dbReference type="ChEBI" id="CHEBI:43474"/>
        <dbReference type="ChEBI" id="CHEBI:57930"/>
        <dbReference type="ChEBI" id="CHEBI:61557"/>
        <dbReference type="EC" id="3.6.1.15"/>
    </reaction>
</comment>
<comment type="catalytic activity">
    <reaction>
        <text>ATP + H2O = ADP + phosphate + H(+)</text>
        <dbReference type="Rhea" id="RHEA:13065"/>
        <dbReference type="ChEBI" id="CHEBI:15377"/>
        <dbReference type="ChEBI" id="CHEBI:15378"/>
        <dbReference type="ChEBI" id="CHEBI:30616"/>
        <dbReference type="ChEBI" id="CHEBI:43474"/>
        <dbReference type="ChEBI" id="CHEBI:456216"/>
        <dbReference type="EC" id="3.6.4.13"/>
    </reaction>
</comment>
<comment type="catalytic activity">
    <reaction evidence="17">
        <text>a 5'-end (5'-triphosphoguanosine)-ribonucleoside in mRNA + S-adenosyl-L-methionine = a 5'-end (N(7)-methyl 5'-triphosphoguanosine)-ribonucleoside in mRNA + S-adenosyl-L-homocysteine</text>
        <dbReference type="Rhea" id="RHEA:67008"/>
        <dbReference type="Rhea" id="RHEA-COMP:17166"/>
        <dbReference type="Rhea" id="RHEA-COMP:17167"/>
        <dbReference type="ChEBI" id="CHEBI:57856"/>
        <dbReference type="ChEBI" id="CHEBI:59789"/>
        <dbReference type="ChEBI" id="CHEBI:156461"/>
        <dbReference type="ChEBI" id="CHEBI:167617"/>
        <dbReference type="EC" id="2.1.1.56"/>
    </reaction>
</comment>
<comment type="catalytic activity">
    <reaction evidence="17">
        <text>a 5'-end (N(7)-methyl 5'-triphosphoguanosine)-ribonucleoside in mRNA + S-adenosyl-L-methionine = a 5'-end (N(7)-methyl 5'-triphosphoguanosine)-(2'-O-methyl-ribonucleoside) in mRNA + S-adenosyl-L-homocysteine + H(+)</text>
        <dbReference type="Rhea" id="RHEA:67020"/>
        <dbReference type="Rhea" id="RHEA-COMP:17167"/>
        <dbReference type="Rhea" id="RHEA-COMP:17168"/>
        <dbReference type="ChEBI" id="CHEBI:15378"/>
        <dbReference type="ChEBI" id="CHEBI:57856"/>
        <dbReference type="ChEBI" id="CHEBI:59789"/>
        <dbReference type="ChEBI" id="CHEBI:156461"/>
        <dbReference type="ChEBI" id="CHEBI:167609"/>
        <dbReference type="EC" id="2.1.1.57"/>
    </reaction>
</comment>
<comment type="subunit">
    <molecule>Capsid protein C</molecule>
    <text evidence="6">Homodimer (By similarity). Interacts (via N-terminus) with host EXOC1 (via C-terminus); this interaction results in EXOC1 degradation through the proteasome degradation pathway (By similarity).</text>
</comment>
<comment type="subunit">
    <molecule>Protein prM</molecule>
    <text evidence="6">Forms heterodimers with envelope protein E in the endoplasmic reticulum and Golgi.</text>
</comment>
<comment type="subunit">
    <molecule>Envelope protein E</molecule>
    <text evidence="6">Homodimer; in the endoplasmic reticulum and Golgi (By similarity). Interacts with protein prM (By similarity). Interacts with non-structural protein 1 (By similarity).</text>
</comment>
<comment type="subunit">
    <molecule>Non-structural protein 1</molecule>
    <text evidence="6">Homodimer; Homohexamer when secreted (By similarity). Interacts with envelope protein E (By similarity).</text>
</comment>
<comment type="subunit">
    <molecule>Non-structural protein 2A</molecule>
    <text evidence="2">Interacts (via N-terminus) with serine protease NS3.</text>
</comment>
<comment type="subunit">
    <molecule>Serine protease subunit NS2B</molecule>
    <text evidence="6">Forms a heterodimer with serine protease NS3 (By similarity). May form homooligomers (By similarity).</text>
</comment>
<comment type="subunit">
    <molecule>Serine protease NS3</molecule>
    <text evidence="6">Forms a heterodimer with NS2B (By similarity). Interacts with non-structural protein 2A (via N-terminus) (By similarity). Interacts with NS4B (By similarity). Interacts with unphosphorylated RNA-directed RNA polymerase NS5; this interaction stimulates RNA-directed RNA polymerase NS5 guanylyltransferase activity (By similarity). NS3 interacts with host PDCD6IP; this interaction contributes to virion release (By similarity).</text>
</comment>
<comment type="subunit">
    <molecule>Non-structural protein 4B</molecule>
    <text evidence="6">Interacts with serine protease NS3 (By similarity).</text>
</comment>
<comment type="subunit">
    <molecule>RNA-directed RNA polymerase NS5</molecule>
    <text evidence="2">Homodimer (By similarity). Interacts with host STAT2; this interaction prevents the establishment of cellular antiviral state (By similarity). Interacts with serine protease NS3 (By similarity). Interacts with host TRIM23; this interaction leads to NS5 ubiquitination (By similarity).</text>
</comment>
<comment type="subcellular location">
    <molecule>Capsid protein C</molecule>
    <subcellularLocation>
        <location evidence="6">Virion</location>
    </subcellularLocation>
    <subcellularLocation>
        <location evidence="6">Host nucleus</location>
    </subcellularLocation>
    <subcellularLocation>
        <location evidence="6">Host cytoplasm</location>
        <location evidence="6">Host perinuclear region</location>
    </subcellularLocation>
    <subcellularLocation>
        <location evidence="6">Host cytoplasm</location>
    </subcellularLocation>
</comment>
<comment type="subcellular location">
    <molecule>Peptide pr</molecule>
    <subcellularLocation>
        <location evidence="6">Secreted</location>
    </subcellularLocation>
</comment>
<comment type="subcellular location">
    <molecule>Small envelope protein M</molecule>
    <subcellularLocation>
        <location evidence="2">Virion membrane</location>
        <topology evidence="2">Multi-pass membrane protein</topology>
    </subcellularLocation>
    <subcellularLocation>
        <location evidence="2">Host endoplasmic reticulum membrane</location>
        <topology evidence="11">Multi-pass membrane protein</topology>
    </subcellularLocation>
    <text evidence="2">ER membrane retention is mediated by the transmembrane domains.</text>
</comment>
<comment type="subcellular location">
    <molecule>Envelope protein E</molecule>
    <subcellularLocation>
        <location evidence="19">Virion membrane</location>
        <topology evidence="2">Multi-pass membrane protein</topology>
    </subcellularLocation>
    <subcellularLocation>
        <location evidence="2">Host endoplasmic reticulum membrane</location>
        <topology evidence="11">Multi-pass membrane protein</topology>
    </subcellularLocation>
    <text evidence="2">ER membrane retention is mediated by the transmembrane domains.</text>
</comment>
<comment type="subcellular location">
    <molecule>Non-structural protein 1</molecule>
    <subcellularLocation>
        <location evidence="6">Secreted</location>
    </subcellularLocation>
    <subcellularLocation>
        <location>Host endoplasmic reticulum membrane</location>
        <topology>Peripheral membrane protein</topology>
        <orientation evidence="6">Lumenal side</orientation>
    </subcellularLocation>
    <text evidence="10">Located in RE-derived vesicles hosting the replication complex.</text>
</comment>
<comment type="subcellular location">
    <molecule>Non-structural protein 2A</molecule>
    <subcellularLocation>
        <location evidence="6">Host endoplasmic reticulum membrane</location>
        <topology evidence="6">Multi-pass membrane protein</topology>
    </subcellularLocation>
</comment>
<comment type="subcellular location">
    <molecule>Serine protease subunit NS2B</molecule>
    <subcellularLocation>
        <location>Host endoplasmic reticulum membrane</location>
        <topology evidence="6">Multi-pass membrane protein</topology>
    </subcellularLocation>
</comment>
<comment type="subcellular location">
    <molecule>Serine protease NS3</molecule>
    <subcellularLocation>
        <location evidence="16">Host endoplasmic reticulum membrane</location>
        <topology evidence="16">Peripheral membrane protein</topology>
        <orientation evidence="16">Cytoplasmic side</orientation>
    </subcellularLocation>
    <text evidence="16">Remains non-covalently associated to serine protease subunit NS2B.</text>
</comment>
<comment type="subcellular location">
    <molecule>Non-structural protein 4A</molecule>
    <subcellularLocation>
        <location evidence="6">Host endoplasmic reticulum membrane</location>
        <topology evidence="6">Multi-pass membrane protein</topology>
    </subcellularLocation>
    <text evidence="6">Located in RE-associated vesicles hosting the replication complex.</text>
</comment>
<comment type="subcellular location">
    <molecule>Non-structural protein 4B</molecule>
    <subcellularLocation>
        <location evidence="6">Host endoplasmic reticulum membrane</location>
        <topology evidence="6">Multi-pass membrane protein</topology>
    </subcellularLocation>
    <text evidence="10">Located in RE-derived vesicles hosting the replication complex.</text>
</comment>
<comment type="subcellular location">
    <molecule>RNA-directed RNA polymerase NS5</molecule>
    <subcellularLocation>
        <location>Host endoplasmic reticulum membrane</location>
        <topology>Peripheral membrane protein</topology>
        <orientation>Cytoplasmic side</orientation>
    </subcellularLocation>
    <subcellularLocation>
        <location evidence="6">Host nucleus</location>
    </subcellularLocation>
    <text evidence="6">Located in RE-associated vesicles hosting the replication complex. NS5 protein is mainly localized in the nucleus rather than in ER vesicles.</text>
</comment>
<comment type="domain">
    <text evidence="6">The transmembrane domains of the small envelope protein M and envelope protein E contain an endoplasmic reticulum retention signal.</text>
</comment>
<comment type="PTM">
    <molecule>Genome polyprotein</molecule>
    <text evidence="2">Specific enzymatic cleavages in vivo yield mature proteins. The nascent capsid protein C contains a C-terminal hydrophobic domain that act as a signal sequence for translocation of prM into the lumen of the ER. Mature capsid protein C is cleaved at a site upstream of this hydrophobic domain by NS3. prM is cleaved in post-Golgi vesicles by a host furin, releasing the mature small envelope protein M, and peptide pr. Non-structural protein 2A-alpha, a C-terminally truncated form of non-structural protein 2A, results from partial cleavage by NS3. Specific enzymatic cleavages in vivo yield mature proteins peptide 2K acts as a signal sequence and is removed from the N-terminus of NS4B by the host signal peptidase in the ER lumen. Signal cleavage at the 2K-4B site requires a prior NS3 protease-mediated cleavage at the 4A-2K site.</text>
</comment>
<comment type="PTM">
    <molecule>Protein prM</molecule>
    <text evidence="6">Cleaved in post-Golgi vesicles by a host furin, releasing the mature small envelope protein M, and peptide pr. This cleavage is incomplete as up to 30% of viral particles still carry uncleaved prM.</text>
</comment>
<comment type="PTM">
    <molecule>Envelope protein E</molecule>
    <text evidence="6">N-glycosylated.</text>
</comment>
<comment type="PTM">
    <molecule>Non-structural protein 1</molecule>
    <text evidence="6">N-glycosylated. The excreted form is glycosylated and this is required for efficient secretion of the protein from infected cells.</text>
</comment>
<comment type="PTM">
    <text evidence="2">Polyubiquitinated; ubiquitination is probably mediated by host TRIM23 and is prerequisite for NS5-STAT2 interaction. NS5 is not ISGylated or sumoylated.</text>
</comment>
<comment type="PTM">
    <molecule>Serine protease NS3</molecule>
    <text evidence="8">Acetylated by host KAT5. Acetylation modulates NS3 RNA-binding and unwinding activities and plays an important positive role for viral replication.</text>
</comment>
<comment type="PTM">
    <molecule>RNA-directed RNA polymerase NS5</molecule>
    <text evidence="6">Phosphorylated on serines residues. This phosphorylation may trigger NS5 nuclear localization.</text>
</comment>
<comment type="similarity">
    <text evidence="17">In the N-terminal section; belongs to the class I-like SAM-binding methyltransferase superfamily. mRNA cap 0-1 NS5-type methyltransferase family.</text>
</comment>
<organism>
    <name type="scientific">Yellow fever virus (isolate Angola/14FA/1971)</name>
    <name type="common">YFV</name>
    <dbReference type="NCBI Taxonomy" id="407140"/>
    <lineage>
        <taxon>Viruses</taxon>
        <taxon>Riboviria</taxon>
        <taxon>Orthornavirae</taxon>
        <taxon>Kitrinoviricota</taxon>
        <taxon>Flasuviricetes</taxon>
        <taxon>Amarillovirales</taxon>
        <taxon>Flaviviridae</taxon>
        <taxon>Orthoflavivirus</taxon>
        <taxon>Orthoflavivirus flavi</taxon>
    </lineage>
</organism>
<sequence>MSGRKAQGKTLGVNMVRRGVRSLSNKIKQKTKQIGNRPGPSRGVQGFIFFFLFNILTGKKLTAHLKKLWRMLDPRQGLAVLRKVKRVVASLMRGLSSRKRRSNEMALFPLLLLGLLALSGGVTLVRKNRWLLLNVTAEDLGKTFSVGTGNCTTNILEAKYWCPDSMEYNCPNLSPREEPDDIDCWCYGVENVRVAYGRCDAVGRSKRSRRAIDLPTHENHGLKTRQEKWMTGRMGERQLQKIERWLVRNPFFAVTALAIAYLVGNNTTQRVVIALLVLAVGPAYSAHCIGITDRDFIEGVHGGTWVSATLEQDKCVTVMAPDKPSLDISLQTVAIDGPAEARKVCYSAVLTHVKINDKCPSTGEAHLAEENDGDNACKRTYSDRGWGNGCGLFGKGSIVACAKFTCAKSMSLFEVDQTKIQYVIRAQLHVGAKQENWNTDIKTLKFDALSGSQEAEFTGYGKATLECQVQTAVDFGNSYIAEMEKDSWIVDRQWAQDLTLPWQSGSGGIWREMHHLVEFEPPHAATIRVLALGNQEGSLKTALTGAMRVTKDENDNNLYKLHGGHVSCRVKLSALTLKGTSYKMCTDKMSFVKNPTDTGHGTVVMQVKVPKGAPCKIPVIVADDLTAAVNKGILVTVNPIASTNDDEVLIEVNPPFGDSYIIVGTGDSRLTYQWHKEGSSIGKLFTQTMKGAERLAVMGDAAWDFSSAGGFFTSVGKGIHTVFGSAFQGLFGGLSWITKVIMGAVLIWVGINTRNMTMSMSMILVGVIMMFLSLGVGADQGCAVNFGKRELKCGDGIFVFRDSDDWLTKYSYYPEDPVKLASIIKASHEEGKCGLNSVDSLEHEMWRSRADEINAIFEENEVDISVVVQDPKNIYQRGTHPFSRIRDGLQYGWKTWGKNLVFSPGRKNGSFIIDGKSRKECPFSNRVWNSFQIEEFGMGVFTTRVFMDATFDYSVDCDGAILGAAVNGKKSAHGSPTFWMGSHEVNGTWMIHTLETLDYKECEWPLTHTIGTSVEESDMFMPRSIGGPVSSHNRIPGYKVQTNGPWMQVPLEVKREVCPGTSVVVDSNCDGRGKSTRSTTDSGKIIPEWCCRSCTMPPVSFHGSDGCWYPMEIRPMKTSDSHLVRSWVTAGEVHAVPFGLVSMMIAMEVVLRRRQGPKQMLVGGVVLLGAMLVGQVTVLDLVKFVVAVGLHFHEINNGGDAMYMALIASFSIRPGLLMGFGLRTLWSPRERLVMAFGAAMVEIALGGMMGGLWQYLNAVSLCVLTINAISSRKASNMILPLMALMTPMTMHEVRMATMLFCTVVIIGVLHQNSKDTSMQKTIPIVALTLTSYMGLTQPFLGLCAYMSTQVFGRRSIPVNEALAAAGLVGVLAGLAFQDMENFLGPIAVGGILMMLVSVAGRVDGLELKKLGEISWEEEAEISGSSSRYDVALSEQGEFKLLSEDKVPWDQIVMTSLALVGAAIHPFALLLVLGGWILHIKGARRSGDVLWDIPTPKVIEECEHLEDGIYGIFQSTFLGASQRGVGVAQGGVFHTMWHVTRGAFLLRNGKKLVPSWASVKEDLVAYGGSWKLDGRWDGEEEVQLIAAVPGKSVVNVQTKPSLFRVKNGGEIGAVALDYPSGTSGSPIVNRNGEVVGLYGNGILVGDNSFVSAISQTELKEESKEELQEIPTMLKKGMTTILDFHPGAGKTRRFLPQILAECARRRLRTLVLAPTRVVLSEMKEAFQGLDVKFHTQAFSAHGSGKEVIDAMCHATLTYRMLEPTRVVNWEVIIMDEAHFLDPASIAARGWAAHRARANESATILMTATPPGTSDEFPHSNGEIEDVQTDIPSEPWTAGHEWILADKRPTAWFLPSIRAANVMAASLRKAGKNVVVLNRKTFEKEYPTIKQKKPDFILATDIAEMGANLCVERVLDCRTAYKPVLVDEGKKVAIKGPLRISASSAAQRRGRIGRNPNRDGDSYYYSEPTSEDNAHHVCWLEASMLLDNMEVRGGMVAPLYGIEGTKTPVSPGEMRLRDDQRRVFRELVRGCDLPVWLAWQVAKAGLKTNDRKWCFEGPEEHEILNDNGETVKCRSPGGAKRALRPRWCDERVSSDQSALADFIKFAEGRRGAAEMLVILTELPDFLAKKGGEAMDTISVFLHSEEGSRAYRNALSMMPEAMTIVMLFLLAGLLTSGAVIFFMSPKGMSRMSMAMGTMAGSGYLMFLGGVKPTHISYVMLIFFVLMVVVIPEPGQQRTIQDNQVAYLIIGILTLLSVVAANELGMLEKTKEDFFGKRDITTPSGAIPWSWPDLDLKPGAAWTVYVGIVTMLSPMLHHWIKVEYGNLSLSGIAQSASVLSFMDKGIPFMKMNISVVILLVSGWNSITVIPLLCGIGGAMLHWTLILPGIKAQQSKLAQKRVFHGVAKNPVVDGNPTADIEEAPEMPALYEKKLALYLLLALSLMSVAMCRTPFSLAEGIVLSSAALGPLIEGNTSLLWNGPMAVSMTGVMRGNYYAFVGVMYNLWKMKTERRGSASGKTLGEVWKRELNLLDKQQFEMYKRTDIIEVDRDMARRHLAEGKVDTGVAVSRGTAKLRWFHERGYVKLEGRVTDLGCGRGGWCYYAAAQKEVSGVKGYTLGRDGHEKPMNVQSLGWNIVTFKDKTDVHRLEPLKCETLLCDIGESSPSSATEGERTLRVLDTVEKWLACGVDNFCIKVLAPYMPDVIEKLELLQRRFGGTVIRNPLSRNSTHEMYYVSGARSNITFTVNQTSRLLMRRMRRPTGKVTLEADVILPIGTRSVETDKGPLDKDAIEERVERIKNEYATTWFYDNDNPYRTWHYCGSYVTKTSGSAASMINGVIKILTFPWDRIEEVTRMAMTDTTPFGQQRVFKEKVDTRAKDPPAGTRKIMKVVNRWLFRHLSREKNPRLCTKEEFIAKVRSHAAVGAFLEEQEQWKTANEAVQDPKFWEMVDAERKLHQQGRCQSCVYNMMGKREKKLSEFGKAKGSRAIWYMWLGARFLEFEALGFLNEDHWASRENSGGGVEGTGLQYLGYVIRDLSAKEGGGFYADDTAGWDTRITEADLDDEQEIMSYMSPEQRKLAWAIMEMTYKNKVVKVLRPAPGGKAFMDIISRRDQRGSGQVVTYALNTITNLKVQLIRMAEAEMVINHQHVQECGENVLERLETWLAENGCDRLSRMAVSGDDCVVRPVDDRFGLALSHLNAMSKVRKDISEWQPSKGWTDWENVPFCSHHFHELVLKDGRKIVVPCRDQDELIGRGRVSPGNGWMIKETACLSKAYANMWSLMYFHKRDMRLLSFAVSSAVPTAWVPSGRTTWSVHGRGEWMTTEDMLDVWNRVWVLNNPHMTDKTTIKEWRDVPYLTKRQDKLCGSLIGMTNRATWASHIHLVIHRIRTLIGQEKFTDYLTVMDRYSVDADLQPGELI</sequence>